<keyword id="KW-0150">Chloroplast</keyword>
<keyword id="KW-0472">Membrane</keyword>
<keyword id="KW-0520">NAD</keyword>
<keyword id="KW-0521">NADP</keyword>
<keyword id="KW-0934">Plastid</keyword>
<keyword id="KW-0618">Plastoquinone</keyword>
<keyword id="KW-0874">Quinone</keyword>
<keyword id="KW-1185">Reference proteome</keyword>
<keyword id="KW-0793">Thylakoid</keyword>
<keyword id="KW-1278">Translocase</keyword>
<keyword id="KW-0812">Transmembrane</keyword>
<keyword id="KW-1133">Transmembrane helix</keyword>
<keyword id="KW-0813">Transport</keyword>
<gene>
    <name evidence="1" type="primary">ndhC</name>
</gene>
<geneLocation type="chloroplast"/>
<evidence type="ECO:0000255" key="1">
    <source>
        <dbReference type="HAMAP-Rule" id="MF_01394"/>
    </source>
</evidence>
<evidence type="ECO:0000305" key="2"/>
<sequence>MFLLYEYDFFWAFLIISILVPILAFFISGVLAPISKGPEKLSTYESGIEPMGDAWLQFRIRYYMFALVFVVFDVETVFLYPWAMSFDVLGVSVFIEAFIFVLILIIGLVYAWRKGALEWS</sequence>
<feature type="chain" id="PRO_0000277571" description="NAD(P)H-quinone oxidoreductase subunit 3, chloroplastic">
    <location>
        <begin position="1"/>
        <end position="120"/>
    </location>
</feature>
<feature type="transmembrane region" description="Helical" evidence="1">
    <location>
        <begin position="9"/>
        <end position="29"/>
    </location>
</feature>
<feature type="transmembrane region" description="Helical" evidence="1">
    <location>
        <begin position="64"/>
        <end position="84"/>
    </location>
</feature>
<feature type="transmembrane region" description="Helical" evidence="1">
    <location>
        <begin position="88"/>
        <end position="108"/>
    </location>
</feature>
<feature type="sequence conflict" description="In Ref. 1; ABB90046." evidence="2" ref="1">
    <original>V</original>
    <variation>L</variation>
    <location>
        <position position="20"/>
    </location>
</feature>
<feature type="sequence conflict" description="In Ref. 1; ABB90046." evidence="2" ref="1">
    <original>L</original>
    <variation>V</variation>
    <location>
        <position position="67"/>
    </location>
</feature>
<feature type="sequence conflict" description="In Ref. 1; ABB90046." evidence="2" ref="1">
    <original>V</original>
    <variation>L</variation>
    <location>
        <position position="88"/>
    </location>
</feature>
<feature type="sequence conflict" description="In Ref. 1; ABB90046." evidence="2" ref="1">
    <original>L</original>
    <variation>V</variation>
    <location>
        <position position="102"/>
    </location>
</feature>
<name>NU3C_SOLTU</name>
<protein>
    <recommendedName>
        <fullName evidence="1">NAD(P)H-quinone oxidoreductase subunit 3, chloroplastic</fullName>
        <ecNumber evidence="1">7.1.1.-</ecNumber>
    </recommendedName>
    <alternativeName>
        <fullName evidence="1">NAD(P)H dehydrogenase subunit 3</fullName>
    </alternativeName>
    <alternativeName>
        <fullName evidence="1">NADH-plastoquinone oxidoreductase subunit 3</fullName>
    </alternativeName>
</protein>
<accession>Q27S45</accession>
<accession>Q2VEH2</accession>
<reference key="1">
    <citation type="journal article" date="2006" name="Plant Cell Rep.">
        <title>The complete chloroplast genome sequences of Solanum tuberosum and comparative analysis with Solanaceae species identified the presence of a 241-bp deletion in cultivated potato chloroplast DNA sequence.</title>
        <authorList>
            <person name="Chung H.-J."/>
            <person name="Jung J.D."/>
            <person name="Park H.-W."/>
            <person name="Kim J.-H."/>
            <person name="Cha H.W."/>
            <person name="Min S.R."/>
            <person name="Jeong W.-J."/>
            <person name="Liu J.R."/>
        </authorList>
    </citation>
    <scope>NUCLEOTIDE SEQUENCE [LARGE SCALE GENOMIC DNA]</scope>
    <source>
        <strain>cv. Desiree</strain>
    </source>
</reference>
<reference key="2">
    <citation type="submission" date="2006-02" db="EMBL/GenBank/DDBJ databases">
        <title>Complete chloroplast genome sequences of Solanum tuberosum cultivar Desiree and comparative analyses with other Solanaceae genomes.</title>
        <authorList>
            <person name="Gargano D."/>
            <person name="Scotti N."/>
            <person name="Vezzi A."/>
            <person name="Bilardi A."/>
            <person name="Valle G."/>
            <person name="Grillo S."/>
            <person name="Cardi T."/>
        </authorList>
    </citation>
    <scope>NUCLEOTIDE SEQUENCE [LARGE SCALE GENOMIC DNA]</scope>
    <source>
        <strain>cv. Desiree</strain>
    </source>
</reference>
<comment type="function">
    <text evidence="1">NDH shuttles electrons from NAD(P)H:plastoquinone, via FMN and iron-sulfur (Fe-S) centers, to quinones in the photosynthetic chain and possibly in a chloroplast respiratory chain. The immediate electron acceptor for the enzyme in this species is believed to be plastoquinone. Couples the redox reaction to proton translocation, and thus conserves the redox energy in a proton gradient.</text>
</comment>
<comment type="catalytic activity">
    <reaction evidence="1">
        <text>a plastoquinone + NADH + (n+1) H(+)(in) = a plastoquinol + NAD(+) + n H(+)(out)</text>
        <dbReference type="Rhea" id="RHEA:42608"/>
        <dbReference type="Rhea" id="RHEA-COMP:9561"/>
        <dbReference type="Rhea" id="RHEA-COMP:9562"/>
        <dbReference type="ChEBI" id="CHEBI:15378"/>
        <dbReference type="ChEBI" id="CHEBI:17757"/>
        <dbReference type="ChEBI" id="CHEBI:57540"/>
        <dbReference type="ChEBI" id="CHEBI:57945"/>
        <dbReference type="ChEBI" id="CHEBI:62192"/>
    </reaction>
</comment>
<comment type="catalytic activity">
    <reaction evidence="1">
        <text>a plastoquinone + NADPH + (n+1) H(+)(in) = a plastoquinol + NADP(+) + n H(+)(out)</text>
        <dbReference type="Rhea" id="RHEA:42612"/>
        <dbReference type="Rhea" id="RHEA-COMP:9561"/>
        <dbReference type="Rhea" id="RHEA-COMP:9562"/>
        <dbReference type="ChEBI" id="CHEBI:15378"/>
        <dbReference type="ChEBI" id="CHEBI:17757"/>
        <dbReference type="ChEBI" id="CHEBI:57783"/>
        <dbReference type="ChEBI" id="CHEBI:58349"/>
        <dbReference type="ChEBI" id="CHEBI:62192"/>
    </reaction>
</comment>
<comment type="subunit">
    <text evidence="1">NDH is composed of at least 16 different subunits, 5 of which are encoded in the nucleus.</text>
</comment>
<comment type="subcellular location">
    <subcellularLocation>
        <location evidence="1">Plastid</location>
        <location evidence="1">Chloroplast thylakoid membrane</location>
        <topology evidence="1">Multi-pass membrane protein</topology>
    </subcellularLocation>
</comment>
<comment type="similarity">
    <text evidence="1">Belongs to the complex I subunit 3 family.</text>
</comment>
<organism>
    <name type="scientific">Solanum tuberosum</name>
    <name type="common">Potato</name>
    <dbReference type="NCBI Taxonomy" id="4113"/>
    <lineage>
        <taxon>Eukaryota</taxon>
        <taxon>Viridiplantae</taxon>
        <taxon>Streptophyta</taxon>
        <taxon>Embryophyta</taxon>
        <taxon>Tracheophyta</taxon>
        <taxon>Spermatophyta</taxon>
        <taxon>Magnoliopsida</taxon>
        <taxon>eudicotyledons</taxon>
        <taxon>Gunneridae</taxon>
        <taxon>Pentapetalae</taxon>
        <taxon>asterids</taxon>
        <taxon>lamiids</taxon>
        <taxon>Solanales</taxon>
        <taxon>Solanaceae</taxon>
        <taxon>Solanoideae</taxon>
        <taxon>Solaneae</taxon>
        <taxon>Solanum</taxon>
    </lineage>
</organism>
<proteinExistence type="inferred from homology"/>
<dbReference type="EC" id="7.1.1.-" evidence="1"/>
<dbReference type="EMBL" id="DQ231562">
    <property type="protein sequence ID" value="ABB90046.1"/>
    <property type="molecule type" value="Genomic_DNA"/>
</dbReference>
<dbReference type="EMBL" id="DQ386163">
    <property type="protein sequence ID" value="ABD47062.1"/>
    <property type="molecule type" value="Genomic_DNA"/>
</dbReference>
<dbReference type="RefSeq" id="YP_635644.1">
    <property type="nucleotide sequence ID" value="NC_008096.2"/>
</dbReference>
<dbReference type="SMR" id="Q27S45"/>
<dbReference type="FunCoup" id="Q27S45">
    <property type="interactions" value="46"/>
</dbReference>
<dbReference type="STRING" id="4113.Q27S45"/>
<dbReference type="PaxDb" id="4113-PGSC0003DMT400039558"/>
<dbReference type="GeneID" id="4099979"/>
<dbReference type="KEGG" id="sot:4099979"/>
<dbReference type="eggNOG" id="KOG4662">
    <property type="taxonomic scope" value="Eukaryota"/>
</dbReference>
<dbReference type="InParanoid" id="Q27S45"/>
<dbReference type="OrthoDB" id="154075at2759"/>
<dbReference type="Proteomes" id="UP000011115">
    <property type="component" value="Unassembled WGS sequence"/>
</dbReference>
<dbReference type="ExpressionAtlas" id="Q27S45">
    <property type="expression patterns" value="baseline"/>
</dbReference>
<dbReference type="GO" id="GO:0009535">
    <property type="term" value="C:chloroplast thylakoid membrane"/>
    <property type="evidence" value="ECO:0007669"/>
    <property type="project" value="UniProtKB-SubCell"/>
</dbReference>
<dbReference type="GO" id="GO:0030964">
    <property type="term" value="C:NADH dehydrogenase complex"/>
    <property type="evidence" value="ECO:0000318"/>
    <property type="project" value="GO_Central"/>
</dbReference>
<dbReference type="GO" id="GO:0008137">
    <property type="term" value="F:NADH dehydrogenase (ubiquinone) activity"/>
    <property type="evidence" value="ECO:0000318"/>
    <property type="project" value="GO_Central"/>
</dbReference>
<dbReference type="GO" id="GO:0048038">
    <property type="term" value="F:quinone binding"/>
    <property type="evidence" value="ECO:0007669"/>
    <property type="project" value="UniProtKB-KW"/>
</dbReference>
<dbReference type="GO" id="GO:0019684">
    <property type="term" value="P:photosynthesis, light reaction"/>
    <property type="evidence" value="ECO:0007669"/>
    <property type="project" value="UniProtKB-UniRule"/>
</dbReference>
<dbReference type="FunFam" id="1.20.58.1610:FF:000001">
    <property type="entry name" value="NAD(P)H-quinone oxidoreductase subunit 3, chloroplastic"/>
    <property type="match status" value="1"/>
</dbReference>
<dbReference type="Gene3D" id="1.20.58.1610">
    <property type="entry name" value="NADH:ubiquinone/plastoquinone oxidoreductase, chain 3"/>
    <property type="match status" value="1"/>
</dbReference>
<dbReference type="HAMAP" id="MF_01394">
    <property type="entry name" value="NDH1_NuoA"/>
    <property type="match status" value="1"/>
</dbReference>
<dbReference type="InterPro" id="IPR023043">
    <property type="entry name" value="NAD(P)H_OxRDtase_bac/plastid"/>
</dbReference>
<dbReference type="InterPro" id="IPR000440">
    <property type="entry name" value="NADH_UbQ/plastoQ_OxRdtase_su3"/>
</dbReference>
<dbReference type="InterPro" id="IPR038430">
    <property type="entry name" value="NDAH_ubi_oxred_su3_sf"/>
</dbReference>
<dbReference type="PANTHER" id="PTHR11058">
    <property type="entry name" value="NADH-UBIQUINONE OXIDOREDUCTASE CHAIN 3"/>
    <property type="match status" value="1"/>
</dbReference>
<dbReference type="PANTHER" id="PTHR11058:SF9">
    <property type="entry name" value="NADH-UBIQUINONE OXIDOREDUCTASE CHAIN 3"/>
    <property type="match status" value="1"/>
</dbReference>
<dbReference type="Pfam" id="PF00507">
    <property type="entry name" value="Oxidored_q4"/>
    <property type="match status" value="1"/>
</dbReference>